<dbReference type="EC" id="6.5.1.2" evidence="1"/>
<dbReference type="EMBL" id="CP000671">
    <property type="protein sequence ID" value="ABQ98655.1"/>
    <property type="molecule type" value="Genomic_DNA"/>
</dbReference>
<dbReference type="SMR" id="A5UD04"/>
<dbReference type="KEGG" id="hip:CGSHiEE_06560"/>
<dbReference type="HOGENOM" id="CLU_007764_2_1_6"/>
<dbReference type="GO" id="GO:0005829">
    <property type="term" value="C:cytosol"/>
    <property type="evidence" value="ECO:0007669"/>
    <property type="project" value="TreeGrafter"/>
</dbReference>
<dbReference type="GO" id="GO:0003677">
    <property type="term" value="F:DNA binding"/>
    <property type="evidence" value="ECO:0007669"/>
    <property type="project" value="InterPro"/>
</dbReference>
<dbReference type="GO" id="GO:0003911">
    <property type="term" value="F:DNA ligase (NAD+) activity"/>
    <property type="evidence" value="ECO:0007669"/>
    <property type="project" value="UniProtKB-UniRule"/>
</dbReference>
<dbReference type="GO" id="GO:0046872">
    <property type="term" value="F:metal ion binding"/>
    <property type="evidence" value="ECO:0007669"/>
    <property type="project" value="UniProtKB-KW"/>
</dbReference>
<dbReference type="GO" id="GO:0006281">
    <property type="term" value="P:DNA repair"/>
    <property type="evidence" value="ECO:0007669"/>
    <property type="project" value="UniProtKB-KW"/>
</dbReference>
<dbReference type="GO" id="GO:0006260">
    <property type="term" value="P:DNA replication"/>
    <property type="evidence" value="ECO:0007669"/>
    <property type="project" value="UniProtKB-KW"/>
</dbReference>
<dbReference type="CDD" id="cd17748">
    <property type="entry name" value="BRCT_DNA_ligase_like"/>
    <property type="match status" value="1"/>
</dbReference>
<dbReference type="CDD" id="cd00114">
    <property type="entry name" value="LIGANc"/>
    <property type="match status" value="1"/>
</dbReference>
<dbReference type="FunFam" id="1.10.150.20:FF:000006">
    <property type="entry name" value="DNA ligase"/>
    <property type="match status" value="1"/>
</dbReference>
<dbReference type="FunFam" id="1.10.150.20:FF:000007">
    <property type="entry name" value="DNA ligase"/>
    <property type="match status" value="1"/>
</dbReference>
<dbReference type="FunFam" id="1.10.287.610:FF:000002">
    <property type="entry name" value="DNA ligase"/>
    <property type="match status" value="1"/>
</dbReference>
<dbReference type="FunFam" id="2.40.50.140:FF:000012">
    <property type="entry name" value="DNA ligase"/>
    <property type="match status" value="1"/>
</dbReference>
<dbReference type="FunFam" id="3.30.470.30:FF:000001">
    <property type="entry name" value="DNA ligase"/>
    <property type="match status" value="1"/>
</dbReference>
<dbReference type="FunFam" id="6.20.10.30:FF:000001">
    <property type="entry name" value="DNA ligase"/>
    <property type="match status" value="1"/>
</dbReference>
<dbReference type="Gene3D" id="6.20.10.30">
    <property type="match status" value="1"/>
</dbReference>
<dbReference type="Gene3D" id="1.10.150.20">
    <property type="entry name" value="5' to 3' exonuclease, C-terminal subdomain"/>
    <property type="match status" value="2"/>
</dbReference>
<dbReference type="Gene3D" id="3.40.50.10190">
    <property type="entry name" value="BRCT domain"/>
    <property type="match status" value="1"/>
</dbReference>
<dbReference type="Gene3D" id="3.30.470.30">
    <property type="entry name" value="DNA ligase/mRNA capping enzyme"/>
    <property type="match status" value="1"/>
</dbReference>
<dbReference type="Gene3D" id="1.10.287.610">
    <property type="entry name" value="Helix hairpin bin"/>
    <property type="match status" value="1"/>
</dbReference>
<dbReference type="Gene3D" id="2.40.50.140">
    <property type="entry name" value="Nucleic acid-binding proteins"/>
    <property type="match status" value="1"/>
</dbReference>
<dbReference type="HAMAP" id="MF_01588">
    <property type="entry name" value="DNA_ligase_A"/>
    <property type="match status" value="1"/>
</dbReference>
<dbReference type="InterPro" id="IPR001357">
    <property type="entry name" value="BRCT_dom"/>
</dbReference>
<dbReference type="InterPro" id="IPR036420">
    <property type="entry name" value="BRCT_dom_sf"/>
</dbReference>
<dbReference type="InterPro" id="IPR041663">
    <property type="entry name" value="DisA/LigA_HHH"/>
</dbReference>
<dbReference type="InterPro" id="IPR001679">
    <property type="entry name" value="DNA_ligase"/>
</dbReference>
<dbReference type="InterPro" id="IPR018239">
    <property type="entry name" value="DNA_ligase_AS"/>
</dbReference>
<dbReference type="InterPro" id="IPR033136">
    <property type="entry name" value="DNA_ligase_CS"/>
</dbReference>
<dbReference type="InterPro" id="IPR013839">
    <property type="entry name" value="DNAligase_adenylation"/>
</dbReference>
<dbReference type="InterPro" id="IPR013840">
    <property type="entry name" value="DNAligase_N"/>
</dbReference>
<dbReference type="InterPro" id="IPR003583">
    <property type="entry name" value="Hlx-hairpin-Hlx_DNA-bd_motif"/>
</dbReference>
<dbReference type="InterPro" id="IPR012340">
    <property type="entry name" value="NA-bd_OB-fold"/>
</dbReference>
<dbReference type="InterPro" id="IPR004150">
    <property type="entry name" value="NAD_DNA_ligase_OB"/>
</dbReference>
<dbReference type="InterPro" id="IPR010994">
    <property type="entry name" value="RuvA_2-like"/>
</dbReference>
<dbReference type="InterPro" id="IPR004149">
    <property type="entry name" value="Znf_DNAligase_C4"/>
</dbReference>
<dbReference type="NCBIfam" id="TIGR00575">
    <property type="entry name" value="dnlj"/>
    <property type="match status" value="1"/>
</dbReference>
<dbReference type="NCBIfam" id="NF005932">
    <property type="entry name" value="PRK07956.1"/>
    <property type="match status" value="1"/>
</dbReference>
<dbReference type="PANTHER" id="PTHR23389">
    <property type="entry name" value="CHROMOSOME TRANSMISSION FIDELITY FACTOR 18"/>
    <property type="match status" value="1"/>
</dbReference>
<dbReference type="PANTHER" id="PTHR23389:SF9">
    <property type="entry name" value="DNA LIGASE"/>
    <property type="match status" value="1"/>
</dbReference>
<dbReference type="Pfam" id="PF00533">
    <property type="entry name" value="BRCT"/>
    <property type="match status" value="1"/>
</dbReference>
<dbReference type="Pfam" id="PF01653">
    <property type="entry name" value="DNA_ligase_aden"/>
    <property type="match status" value="1"/>
</dbReference>
<dbReference type="Pfam" id="PF03120">
    <property type="entry name" value="DNA_ligase_OB"/>
    <property type="match status" value="1"/>
</dbReference>
<dbReference type="Pfam" id="PF03119">
    <property type="entry name" value="DNA_ligase_ZBD"/>
    <property type="match status" value="1"/>
</dbReference>
<dbReference type="Pfam" id="PF12826">
    <property type="entry name" value="HHH_2"/>
    <property type="match status" value="1"/>
</dbReference>
<dbReference type="Pfam" id="PF14520">
    <property type="entry name" value="HHH_5"/>
    <property type="match status" value="1"/>
</dbReference>
<dbReference type="Pfam" id="PF22745">
    <property type="entry name" value="Nlig-Ia"/>
    <property type="match status" value="1"/>
</dbReference>
<dbReference type="PIRSF" id="PIRSF001604">
    <property type="entry name" value="LigA"/>
    <property type="match status" value="1"/>
</dbReference>
<dbReference type="SMART" id="SM00292">
    <property type="entry name" value="BRCT"/>
    <property type="match status" value="1"/>
</dbReference>
<dbReference type="SMART" id="SM00278">
    <property type="entry name" value="HhH1"/>
    <property type="match status" value="4"/>
</dbReference>
<dbReference type="SMART" id="SM00532">
    <property type="entry name" value="LIGANc"/>
    <property type="match status" value="1"/>
</dbReference>
<dbReference type="SUPFAM" id="SSF52113">
    <property type="entry name" value="BRCT domain"/>
    <property type="match status" value="1"/>
</dbReference>
<dbReference type="SUPFAM" id="SSF56091">
    <property type="entry name" value="DNA ligase/mRNA capping enzyme, catalytic domain"/>
    <property type="match status" value="1"/>
</dbReference>
<dbReference type="SUPFAM" id="SSF50249">
    <property type="entry name" value="Nucleic acid-binding proteins"/>
    <property type="match status" value="1"/>
</dbReference>
<dbReference type="SUPFAM" id="SSF47781">
    <property type="entry name" value="RuvA domain 2-like"/>
    <property type="match status" value="1"/>
</dbReference>
<dbReference type="PROSITE" id="PS50172">
    <property type="entry name" value="BRCT"/>
    <property type="match status" value="1"/>
</dbReference>
<dbReference type="PROSITE" id="PS01055">
    <property type="entry name" value="DNA_LIGASE_N1"/>
    <property type="match status" value="1"/>
</dbReference>
<dbReference type="PROSITE" id="PS01056">
    <property type="entry name" value="DNA_LIGASE_N2"/>
    <property type="match status" value="1"/>
</dbReference>
<sequence length="670" mass="74046">MTNIQTQLDNLRKTLRQYEYEYHVLDNPSVPDSEYDRLFHQLKALELEHPEFLTSDSPTQRVGAKPLSGFSQIRHEIPMLSLDNAFSDAEFNAFVKRIEDRLILLPKQLTFCCEPKLDGLAVSILYVNGVLTQAATRGDGTIGEDITANIRTIRNVPLQLLTDNPPARLEVRGEVFMPHAGFERLNKYALEHNEKTFANPRNAAAGSLRQLDPNITSKRPLVLNAYGIGIAEGVDLPTTHYARLQWLKSIGIPVNPEIRLCNGADEVLGFYQDIQNKRSSLGYDIDGTVLKINDIALQNELGFISKAPRWATAYKFPAQEELTLLNDVEFQVGRTGAITPVAKLEPVFVAGVTVSNATLHNGDEIERLNIAIGDTVVIRRAGDVIPQIIGVLHERRPDNAKPIIFPTNCPVCDSQIIRIEGEAVARCTGGLFCAAQRKEALKHFVSRKAMDIDGVGGKLIEQLVDRELIHTPADLFKLDLTTLTRLERMGTKSAENALNSLENAKSTTLARFIFALGIREVGEATALNLANHFKTLDALKDANLEELQQVPDVGEVVANRIFIFWREAHNVAVVEDLIAQGVHWETVEVKEASENLFKDKTVVLTGTLTQMGRNEAKALLQQLGAKVSGSVSSKTDFVIAGDAAGSKLAKAQELNITVLTEEEFLAQITR</sequence>
<name>DNLJ_HAEIE</name>
<keyword id="KW-0227">DNA damage</keyword>
<keyword id="KW-0234">DNA repair</keyword>
<keyword id="KW-0235">DNA replication</keyword>
<keyword id="KW-0436">Ligase</keyword>
<keyword id="KW-0460">Magnesium</keyword>
<keyword id="KW-0464">Manganese</keyword>
<keyword id="KW-0479">Metal-binding</keyword>
<keyword id="KW-0520">NAD</keyword>
<keyword id="KW-0862">Zinc</keyword>
<protein>
    <recommendedName>
        <fullName evidence="1">DNA ligase</fullName>
        <ecNumber evidence="1">6.5.1.2</ecNumber>
    </recommendedName>
    <alternativeName>
        <fullName evidence="1">Polydeoxyribonucleotide synthase [NAD(+)]</fullName>
    </alternativeName>
</protein>
<feature type="chain" id="PRO_0000313257" description="DNA ligase">
    <location>
        <begin position="1"/>
        <end position="670"/>
    </location>
</feature>
<feature type="domain" description="BRCT" evidence="1">
    <location>
        <begin position="592"/>
        <end position="670"/>
    </location>
</feature>
<feature type="active site" description="N6-AMP-lysine intermediate" evidence="1">
    <location>
        <position position="116"/>
    </location>
</feature>
<feature type="binding site" evidence="1">
    <location>
        <begin position="32"/>
        <end position="36"/>
    </location>
    <ligand>
        <name>NAD(+)</name>
        <dbReference type="ChEBI" id="CHEBI:57540"/>
    </ligand>
</feature>
<feature type="binding site" evidence="1">
    <location>
        <begin position="81"/>
        <end position="82"/>
    </location>
    <ligand>
        <name>NAD(+)</name>
        <dbReference type="ChEBI" id="CHEBI:57540"/>
    </ligand>
</feature>
<feature type="binding site" evidence="1">
    <location>
        <position position="114"/>
    </location>
    <ligand>
        <name>NAD(+)</name>
        <dbReference type="ChEBI" id="CHEBI:57540"/>
    </ligand>
</feature>
<feature type="binding site" evidence="1">
    <location>
        <position position="137"/>
    </location>
    <ligand>
        <name>NAD(+)</name>
        <dbReference type="ChEBI" id="CHEBI:57540"/>
    </ligand>
</feature>
<feature type="binding site" evidence="1">
    <location>
        <position position="174"/>
    </location>
    <ligand>
        <name>NAD(+)</name>
        <dbReference type="ChEBI" id="CHEBI:57540"/>
    </ligand>
</feature>
<feature type="binding site" evidence="1">
    <location>
        <position position="291"/>
    </location>
    <ligand>
        <name>NAD(+)</name>
        <dbReference type="ChEBI" id="CHEBI:57540"/>
    </ligand>
</feature>
<feature type="binding site" evidence="1">
    <location>
        <position position="315"/>
    </location>
    <ligand>
        <name>NAD(+)</name>
        <dbReference type="ChEBI" id="CHEBI:57540"/>
    </ligand>
</feature>
<feature type="binding site" evidence="1">
    <location>
        <position position="409"/>
    </location>
    <ligand>
        <name>Zn(2+)</name>
        <dbReference type="ChEBI" id="CHEBI:29105"/>
    </ligand>
</feature>
<feature type="binding site" evidence="1">
    <location>
        <position position="412"/>
    </location>
    <ligand>
        <name>Zn(2+)</name>
        <dbReference type="ChEBI" id="CHEBI:29105"/>
    </ligand>
</feature>
<feature type="binding site" evidence="1">
    <location>
        <position position="427"/>
    </location>
    <ligand>
        <name>Zn(2+)</name>
        <dbReference type="ChEBI" id="CHEBI:29105"/>
    </ligand>
</feature>
<feature type="binding site" evidence="1">
    <location>
        <position position="433"/>
    </location>
    <ligand>
        <name>Zn(2+)</name>
        <dbReference type="ChEBI" id="CHEBI:29105"/>
    </ligand>
</feature>
<reference key="1">
    <citation type="journal article" date="2007" name="Genome Biol.">
        <title>Characterization and modeling of the Haemophilus influenzae core and supragenomes based on the complete genomic sequences of Rd and 12 clinical nontypeable strains.</title>
        <authorList>
            <person name="Hogg J.S."/>
            <person name="Hu F.Z."/>
            <person name="Janto B."/>
            <person name="Boissy R."/>
            <person name="Hayes J."/>
            <person name="Keefe R."/>
            <person name="Post J.C."/>
            <person name="Ehrlich G.D."/>
        </authorList>
    </citation>
    <scope>NUCLEOTIDE SEQUENCE [LARGE SCALE GENOMIC DNA]</scope>
    <source>
        <strain>PittEE</strain>
    </source>
</reference>
<proteinExistence type="inferred from homology"/>
<accession>A5UD04</accession>
<evidence type="ECO:0000255" key="1">
    <source>
        <dbReference type="HAMAP-Rule" id="MF_01588"/>
    </source>
</evidence>
<gene>
    <name evidence="1" type="primary">ligA</name>
    <name type="ordered locus">CGSHiEE_06560</name>
</gene>
<organism>
    <name type="scientific">Haemophilus influenzae (strain PittEE)</name>
    <dbReference type="NCBI Taxonomy" id="374930"/>
    <lineage>
        <taxon>Bacteria</taxon>
        <taxon>Pseudomonadati</taxon>
        <taxon>Pseudomonadota</taxon>
        <taxon>Gammaproteobacteria</taxon>
        <taxon>Pasteurellales</taxon>
        <taxon>Pasteurellaceae</taxon>
        <taxon>Haemophilus</taxon>
    </lineage>
</organism>
<comment type="function">
    <text evidence="1">DNA ligase that catalyzes the formation of phosphodiester linkages between 5'-phosphoryl and 3'-hydroxyl groups in double-stranded DNA using NAD as a coenzyme and as the energy source for the reaction. It is essential for DNA replication and repair of damaged DNA.</text>
</comment>
<comment type="catalytic activity">
    <reaction evidence="1">
        <text>NAD(+) + (deoxyribonucleotide)n-3'-hydroxyl + 5'-phospho-(deoxyribonucleotide)m = (deoxyribonucleotide)n+m + AMP + beta-nicotinamide D-nucleotide.</text>
        <dbReference type="EC" id="6.5.1.2"/>
    </reaction>
</comment>
<comment type="cofactor">
    <cofactor evidence="1">
        <name>Mg(2+)</name>
        <dbReference type="ChEBI" id="CHEBI:18420"/>
    </cofactor>
    <cofactor evidence="1">
        <name>Mn(2+)</name>
        <dbReference type="ChEBI" id="CHEBI:29035"/>
    </cofactor>
</comment>
<comment type="similarity">
    <text evidence="1">Belongs to the NAD-dependent DNA ligase family. LigA subfamily.</text>
</comment>